<organism>
    <name type="scientific">Haloarcula marismortui (strain ATCC 43049 / DSM 3752 / JCM 8966 / VKM B-1809)</name>
    <name type="common">Halobacterium marismortui</name>
    <dbReference type="NCBI Taxonomy" id="272569"/>
    <lineage>
        <taxon>Archaea</taxon>
        <taxon>Methanobacteriati</taxon>
        <taxon>Methanobacteriota</taxon>
        <taxon>Stenosarchaea group</taxon>
        <taxon>Halobacteria</taxon>
        <taxon>Halobacteriales</taxon>
        <taxon>Haloarculaceae</taxon>
        <taxon>Haloarcula</taxon>
    </lineage>
</organism>
<sequence length="196" mass="22355">MARSAYSYIRDAWKNPGDGQLAELQWQRQQEWRNEGAVERIERPTRLDKARSQGYKAKQGVIVARVSVRKGSARKRRHKAGRRSKRQGVTRITRRKDIQRVAEERASRTFPNLRVLNSYSVGQDGRQKWHEVILIDPNHPAIQNDDDLSWICADDQADRVFRGLTGAGRRNRGLSGKGKGSEKTRPSLRSNGGKGK</sequence>
<dbReference type="EMBL" id="AY596297">
    <property type="protein sequence ID" value="AAV46920.1"/>
    <property type="molecule type" value="Genomic_DNA"/>
</dbReference>
<dbReference type="PIR" id="H28949">
    <property type="entry name" value="H28949"/>
</dbReference>
<dbReference type="RefSeq" id="WP_004958369.1">
    <property type="nucleotide sequence ID" value="NZ_CP039138.1"/>
</dbReference>
<dbReference type="PDB" id="1FFK">
    <property type="method" value="X-ray"/>
    <property type="resolution" value="2.40 A"/>
    <property type="chains" value="I=37-194"/>
</dbReference>
<dbReference type="PDB" id="1JJ2">
    <property type="method" value="X-ray"/>
    <property type="resolution" value="2.40 A"/>
    <property type="chains" value="L=2-194"/>
</dbReference>
<dbReference type="PDB" id="1K73">
    <property type="method" value="X-ray"/>
    <property type="resolution" value="3.01 A"/>
    <property type="chains" value="N=2-194"/>
</dbReference>
<dbReference type="PDB" id="1K8A">
    <property type="method" value="X-ray"/>
    <property type="resolution" value="3.00 A"/>
    <property type="chains" value="N=2-194"/>
</dbReference>
<dbReference type="PDB" id="1K9M">
    <property type="method" value="X-ray"/>
    <property type="resolution" value="3.00 A"/>
    <property type="chains" value="N=2-194"/>
</dbReference>
<dbReference type="PDB" id="1KC8">
    <property type="method" value="X-ray"/>
    <property type="resolution" value="3.01 A"/>
    <property type="chains" value="N=2-194"/>
</dbReference>
<dbReference type="PDB" id="1KD1">
    <property type="method" value="X-ray"/>
    <property type="resolution" value="3.00 A"/>
    <property type="chains" value="N=2-194"/>
</dbReference>
<dbReference type="PDB" id="1KQS">
    <property type="method" value="X-ray"/>
    <property type="resolution" value="3.10 A"/>
    <property type="chains" value="L=2-194"/>
</dbReference>
<dbReference type="PDB" id="1M1K">
    <property type="method" value="X-ray"/>
    <property type="resolution" value="3.20 A"/>
    <property type="chains" value="N=2-194"/>
</dbReference>
<dbReference type="PDB" id="1M90">
    <property type="method" value="X-ray"/>
    <property type="resolution" value="2.80 A"/>
    <property type="chains" value="N=2-194"/>
</dbReference>
<dbReference type="PDB" id="1N8R">
    <property type="method" value="X-ray"/>
    <property type="resolution" value="3.00 A"/>
    <property type="chains" value="N=2-194"/>
</dbReference>
<dbReference type="PDB" id="1NJI">
    <property type="method" value="X-ray"/>
    <property type="resolution" value="3.00 A"/>
    <property type="chains" value="N=2-194"/>
</dbReference>
<dbReference type="PDB" id="1Q7Y">
    <property type="method" value="X-ray"/>
    <property type="resolution" value="3.20 A"/>
    <property type="chains" value="N=2-194"/>
</dbReference>
<dbReference type="PDB" id="1Q81">
    <property type="method" value="X-ray"/>
    <property type="resolution" value="2.95 A"/>
    <property type="chains" value="N=2-194"/>
</dbReference>
<dbReference type="PDB" id="1Q82">
    <property type="method" value="X-ray"/>
    <property type="resolution" value="2.98 A"/>
    <property type="chains" value="N=2-194"/>
</dbReference>
<dbReference type="PDB" id="1Q86">
    <property type="method" value="X-ray"/>
    <property type="resolution" value="3.00 A"/>
    <property type="chains" value="N=2-194"/>
</dbReference>
<dbReference type="PDB" id="1QVF">
    <property type="method" value="X-ray"/>
    <property type="resolution" value="3.10 A"/>
    <property type="chains" value="L=2-194"/>
</dbReference>
<dbReference type="PDB" id="1QVG">
    <property type="method" value="X-ray"/>
    <property type="resolution" value="2.90 A"/>
    <property type="chains" value="L=2-194"/>
</dbReference>
<dbReference type="PDB" id="1S72">
    <property type="method" value="X-ray"/>
    <property type="resolution" value="2.40 A"/>
    <property type="chains" value="M=2-194"/>
</dbReference>
<dbReference type="PDB" id="1VQ4">
    <property type="method" value="X-ray"/>
    <property type="resolution" value="2.70 A"/>
    <property type="chains" value="M=2-194"/>
</dbReference>
<dbReference type="PDB" id="1VQ5">
    <property type="method" value="X-ray"/>
    <property type="resolution" value="2.60 A"/>
    <property type="chains" value="M=2-194"/>
</dbReference>
<dbReference type="PDB" id="1VQ6">
    <property type="method" value="X-ray"/>
    <property type="resolution" value="2.70 A"/>
    <property type="chains" value="M=2-194"/>
</dbReference>
<dbReference type="PDB" id="1VQ7">
    <property type="method" value="X-ray"/>
    <property type="resolution" value="2.50 A"/>
    <property type="chains" value="M=2-194"/>
</dbReference>
<dbReference type="PDB" id="1VQ8">
    <property type="method" value="X-ray"/>
    <property type="resolution" value="2.20 A"/>
    <property type="chains" value="M=2-194"/>
</dbReference>
<dbReference type="PDB" id="1VQ9">
    <property type="method" value="X-ray"/>
    <property type="resolution" value="2.40 A"/>
    <property type="chains" value="M=1-194"/>
</dbReference>
<dbReference type="PDB" id="1VQK">
    <property type="method" value="X-ray"/>
    <property type="resolution" value="2.30 A"/>
    <property type="chains" value="M=1-194"/>
</dbReference>
<dbReference type="PDB" id="1VQL">
    <property type="method" value="X-ray"/>
    <property type="resolution" value="2.30 A"/>
    <property type="chains" value="M=1-194"/>
</dbReference>
<dbReference type="PDB" id="1VQM">
    <property type="method" value="X-ray"/>
    <property type="resolution" value="2.30 A"/>
    <property type="chains" value="M=1-194"/>
</dbReference>
<dbReference type="PDB" id="1VQN">
    <property type="method" value="X-ray"/>
    <property type="resolution" value="2.40 A"/>
    <property type="chains" value="M=2-194"/>
</dbReference>
<dbReference type="PDB" id="1VQO">
    <property type="method" value="X-ray"/>
    <property type="resolution" value="2.20 A"/>
    <property type="chains" value="M=1-194"/>
</dbReference>
<dbReference type="PDB" id="1VQP">
    <property type="method" value="X-ray"/>
    <property type="resolution" value="2.25 A"/>
    <property type="chains" value="M=1-194"/>
</dbReference>
<dbReference type="PDB" id="1W2B">
    <property type="method" value="X-ray"/>
    <property type="resolution" value="3.50 A"/>
    <property type="chains" value="L=2-194"/>
</dbReference>
<dbReference type="PDB" id="1YHQ">
    <property type="method" value="X-ray"/>
    <property type="resolution" value="2.40 A"/>
    <property type="chains" value="M=2-195"/>
</dbReference>
<dbReference type="PDB" id="1YI2">
    <property type="method" value="X-ray"/>
    <property type="resolution" value="2.65 A"/>
    <property type="chains" value="M=1-195"/>
</dbReference>
<dbReference type="PDB" id="1YIJ">
    <property type="method" value="X-ray"/>
    <property type="resolution" value="2.60 A"/>
    <property type="chains" value="M=1-195"/>
</dbReference>
<dbReference type="PDB" id="1YIT">
    <property type="method" value="X-ray"/>
    <property type="resolution" value="2.80 A"/>
    <property type="chains" value="M=1-195"/>
</dbReference>
<dbReference type="PDB" id="1YJ9">
    <property type="method" value="X-ray"/>
    <property type="resolution" value="2.90 A"/>
    <property type="chains" value="M=1-195"/>
</dbReference>
<dbReference type="PDB" id="1YJN">
    <property type="method" value="X-ray"/>
    <property type="resolution" value="3.00 A"/>
    <property type="chains" value="M=1-195"/>
</dbReference>
<dbReference type="PDB" id="1YJW">
    <property type="method" value="X-ray"/>
    <property type="resolution" value="2.90 A"/>
    <property type="chains" value="M=1-195"/>
</dbReference>
<dbReference type="PDB" id="2OTJ">
    <property type="method" value="X-ray"/>
    <property type="resolution" value="2.90 A"/>
    <property type="chains" value="M=2-194"/>
</dbReference>
<dbReference type="PDB" id="2OTL">
    <property type="method" value="X-ray"/>
    <property type="resolution" value="2.70 A"/>
    <property type="chains" value="M=2-194"/>
</dbReference>
<dbReference type="PDB" id="2QA4">
    <property type="method" value="X-ray"/>
    <property type="resolution" value="3.00 A"/>
    <property type="chains" value="M=1-194"/>
</dbReference>
<dbReference type="PDB" id="2QEX">
    <property type="method" value="X-ray"/>
    <property type="resolution" value="2.90 A"/>
    <property type="chains" value="M=1-194"/>
</dbReference>
<dbReference type="PDB" id="3CC2">
    <property type="method" value="X-ray"/>
    <property type="resolution" value="2.40 A"/>
    <property type="chains" value="M=1-196"/>
</dbReference>
<dbReference type="PDB" id="3CC4">
    <property type="method" value="X-ray"/>
    <property type="resolution" value="2.70 A"/>
    <property type="chains" value="M=1-196"/>
</dbReference>
<dbReference type="PDB" id="3CC7">
    <property type="method" value="X-ray"/>
    <property type="resolution" value="2.70 A"/>
    <property type="chains" value="M=1-196"/>
</dbReference>
<dbReference type="PDB" id="3CCE">
    <property type="method" value="X-ray"/>
    <property type="resolution" value="2.75 A"/>
    <property type="chains" value="M=1-196"/>
</dbReference>
<dbReference type="PDB" id="3CCJ">
    <property type="method" value="X-ray"/>
    <property type="resolution" value="2.70 A"/>
    <property type="chains" value="M=1-196"/>
</dbReference>
<dbReference type="PDB" id="3CCL">
    <property type="method" value="X-ray"/>
    <property type="resolution" value="2.90 A"/>
    <property type="chains" value="M=1-196"/>
</dbReference>
<dbReference type="PDB" id="3CCM">
    <property type="method" value="X-ray"/>
    <property type="resolution" value="2.55 A"/>
    <property type="chains" value="M=1-196"/>
</dbReference>
<dbReference type="PDB" id="3CCQ">
    <property type="method" value="X-ray"/>
    <property type="resolution" value="2.90 A"/>
    <property type="chains" value="M=1-196"/>
</dbReference>
<dbReference type="PDB" id="3CCR">
    <property type="method" value="X-ray"/>
    <property type="resolution" value="3.00 A"/>
    <property type="chains" value="M=1-196"/>
</dbReference>
<dbReference type="PDB" id="3CCS">
    <property type="method" value="X-ray"/>
    <property type="resolution" value="2.95 A"/>
    <property type="chains" value="M=1-196"/>
</dbReference>
<dbReference type="PDB" id="3CCU">
    <property type="method" value="X-ray"/>
    <property type="resolution" value="2.80 A"/>
    <property type="chains" value="M=1-196"/>
</dbReference>
<dbReference type="PDB" id="3CCV">
    <property type="method" value="X-ray"/>
    <property type="resolution" value="2.90 A"/>
    <property type="chains" value="M=1-196"/>
</dbReference>
<dbReference type="PDB" id="3CD6">
    <property type="method" value="X-ray"/>
    <property type="resolution" value="2.75 A"/>
    <property type="chains" value="M=1-196"/>
</dbReference>
<dbReference type="PDB" id="3CMA">
    <property type="method" value="X-ray"/>
    <property type="resolution" value="2.80 A"/>
    <property type="chains" value="M=1-196"/>
</dbReference>
<dbReference type="PDB" id="3CME">
    <property type="method" value="X-ray"/>
    <property type="resolution" value="2.95 A"/>
    <property type="chains" value="M=1-196"/>
</dbReference>
<dbReference type="PDB" id="3CPW">
    <property type="method" value="X-ray"/>
    <property type="resolution" value="2.70 A"/>
    <property type="chains" value="L=1-196"/>
</dbReference>
<dbReference type="PDB" id="3G4S">
    <property type="method" value="X-ray"/>
    <property type="resolution" value="3.20 A"/>
    <property type="chains" value="M=2-195"/>
</dbReference>
<dbReference type="PDB" id="3G6E">
    <property type="method" value="X-ray"/>
    <property type="resolution" value="2.70 A"/>
    <property type="chains" value="M=2-195"/>
</dbReference>
<dbReference type="PDB" id="3G71">
    <property type="method" value="X-ray"/>
    <property type="resolution" value="2.85 A"/>
    <property type="chains" value="M=2-195"/>
</dbReference>
<dbReference type="PDB" id="3I55">
    <property type="method" value="X-ray"/>
    <property type="resolution" value="3.11 A"/>
    <property type="chains" value="M=2-194"/>
</dbReference>
<dbReference type="PDB" id="3I56">
    <property type="method" value="X-ray"/>
    <property type="resolution" value="2.90 A"/>
    <property type="chains" value="M=2-194"/>
</dbReference>
<dbReference type="PDB" id="4ADX">
    <property type="method" value="EM"/>
    <property type="resolution" value="6.60 A"/>
    <property type="chains" value="M=1-196"/>
</dbReference>
<dbReference type="PDB" id="4V9F">
    <property type="method" value="X-ray"/>
    <property type="resolution" value="2.40 A"/>
    <property type="chains" value="M=1-196"/>
</dbReference>
<dbReference type="PDBsum" id="1FFK"/>
<dbReference type="PDBsum" id="1JJ2"/>
<dbReference type="PDBsum" id="1K73"/>
<dbReference type="PDBsum" id="1K8A"/>
<dbReference type="PDBsum" id="1K9M"/>
<dbReference type="PDBsum" id="1KC8"/>
<dbReference type="PDBsum" id="1KD1"/>
<dbReference type="PDBsum" id="1KQS"/>
<dbReference type="PDBsum" id="1M1K"/>
<dbReference type="PDBsum" id="1M90"/>
<dbReference type="PDBsum" id="1N8R"/>
<dbReference type="PDBsum" id="1NJI"/>
<dbReference type="PDBsum" id="1Q7Y"/>
<dbReference type="PDBsum" id="1Q81"/>
<dbReference type="PDBsum" id="1Q82"/>
<dbReference type="PDBsum" id="1Q86"/>
<dbReference type="PDBsum" id="1QVF"/>
<dbReference type="PDBsum" id="1QVG"/>
<dbReference type="PDBsum" id="1S72"/>
<dbReference type="PDBsum" id="1VQ4"/>
<dbReference type="PDBsum" id="1VQ5"/>
<dbReference type="PDBsum" id="1VQ6"/>
<dbReference type="PDBsum" id="1VQ7"/>
<dbReference type="PDBsum" id="1VQ8"/>
<dbReference type="PDBsum" id="1VQ9"/>
<dbReference type="PDBsum" id="1VQK"/>
<dbReference type="PDBsum" id="1VQL"/>
<dbReference type="PDBsum" id="1VQM"/>
<dbReference type="PDBsum" id="1VQN"/>
<dbReference type="PDBsum" id="1VQO"/>
<dbReference type="PDBsum" id="1VQP"/>
<dbReference type="PDBsum" id="1W2B"/>
<dbReference type="PDBsum" id="1YHQ"/>
<dbReference type="PDBsum" id="1YI2"/>
<dbReference type="PDBsum" id="1YIJ"/>
<dbReference type="PDBsum" id="1YIT"/>
<dbReference type="PDBsum" id="1YJ9"/>
<dbReference type="PDBsum" id="1YJN"/>
<dbReference type="PDBsum" id="1YJW"/>
<dbReference type="PDBsum" id="2OTJ"/>
<dbReference type="PDBsum" id="2OTL"/>
<dbReference type="PDBsum" id="2QA4"/>
<dbReference type="PDBsum" id="2QEX"/>
<dbReference type="PDBsum" id="3CC2"/>
<dbReference type="PDBsum" id="3CC4"/>
<dbReference type="PDBsum" id="3CC7"/>
<dbReference type="PDBsum" id="3CCE"/>
<dbReference type="PDBsum" id="3CCJ"/>
<dbReference type="PDBsum" id="3CCL"/>
<dbReference type="PDBsum" id="3CCM"/>
<dbReference type="PDBsum" id="3CCQ"/>
<dbReference type="PDBsum" id="3CCR"/>
<dbReference type="PDBsum" id="3CCS"/>
<dbReference type="PDBsum" id="3CCU"/>
<dbReference type="PDBsum" id="3CCV"/>
<dbReference type="PDBsum" id="3CD6"/>
<dbReference type="PDBsum" id="3CMA"/>
<dbReference type="PDBsum" id="3CME"/>
<dbReference type="PDBsum" id="3CPW"/>
<dbReference type="PDBsum" id="3G4S"/>
<dbReference type="PDBsum" id="3G6E"/>
<dbReference type="PDBsum" id="3G71"/>
<dbReference type="PDBsum" id="3I55"/>
<dbReference type="PDBsum" id="3I56"/>
<dbReference type="PDBsum" id="4ADX"/>
<dbReference type="PDBsum" id="4V9F"/>
<dbReference type="SMR" id="P60618"/>
<dbReference type="IntAct" id="P60618">
    <property type="interactions" value="2"/>
</dbReference>
<dbReference type="STRING" id="272569.rrnAC2065"/>
<dbReference type="PaxDb" id="272569-rrnAC2065"/>
<dbReference type="EnsemblBacteria" id="AAV46920">
    <property type="protein sequence ID" value="AAV46920"/>
    <property type="gene ID" value="rrnAC2065"/>
</dbReference>
<dbReference type="KEGG" id="hma:rrnAC2065"/>
<dbReference type="PATRIC" id="fig|272569.17.peg.2714"/>
<dbReference type="eggNOG" id="arCOG04209">
    <property type="taxonomic scope" value="Archaea"/>
</dbReference>
<dbReference type="HOGENOM" id="CLU_080796_1_0_2"/>
<dbReference type="EvolutionaryTrace" id="P60618"/>
<dbReference type="Proteomes" id="UP000001169">
    <property type="component" value="Chromosome I"/>
</dbReference>
<dbReference type="GO" id="GO:0022625">
    <property type="term" value="C:cytosolic large ribosomal subunit"/>
    <property type="evidence" value="ECO:0007669"/>
    <property type="project" value="TreeGrafter"/>
</dbReference>
<dbReference type="GO" id="GO:0019843">
    <property type="term" value="F:rRNA binding"/>
    <property type="evidence" value="ECO:0007669"/>
    <property type="project" value="UniProtKB-KW"/>
</dbReference>
<dbReference type="GO" id="GO:0003735">
    <property type="term" value="F:structural constituent of ribosome"/>
    <property type="evidence" value="ECO:0007669"/>
    <property type="project" value="InterPro"/>
</dbReference>
<dbReference type="GO" id="GO:0002181">
    <property type="term" value="P:cytoplasmic translation"/>
    <property type="evidence" value="ECO:0007669"/>
    <property type="project" value="TreeGrafter"/>
</dbReference>
<dbReference type="FunFam" id="3.40.1120.10:FF:000002">
    <property type="entry name" value="50S ribosomal protein L15e"/>
    <property type="match status" value="1"/>
</dbReference>
<dbReference type="Gene3D" id="3.40.1120.10">
    <property type="entry name" value="Ribosomal protein l15e"/>
    <property type="match status" value="1"/>
</dbReference>
<dbReference type="HAMAP" id="MF_00256">
    <property type="entry name" value="Ribosomal_eL15"/>
    <property type="match status" value="1"/>
</dbReference>
<dbReference type="InterPro" id="IPR024794">
    <property type="entry name" value="Rbsml_eL15_core_dom_sf"/>
</dbReference>
<dbReference type="InterPro" id="IPR000439">
    <property type="entry name" value="Ribosomal_eL15"/>
</dbReference>
<dbReference type="InterPro" id="IPR020926">
    <property type="entry name" value="Ribosomal_eL15_arc"/>
</dbReference>
<dbReference type="InterPro" id="IPR020925">
    <property type="entry name" value="Ribosomal_eL15_CS"/>
</dbReference>
<dbReference type="InterPro" id="IPR012678">
    <property type="entry name" value="Ribosomal_uL23/eL15/eS24_sf"/>
</dbReference>
<dbReference type="NCBIfam" id="NF003269">
    <property type="entry name" value="PRK04243.1"/>
    <property type="match status" value="1"/>
</dbReference>
<dbReference type="PANTHER" id="PTHR11847:SF4">
    <property type="entry name" value="LARGE RIBOSOMAL SUBUNIT PROTEIN EL15"/>
    <property type="match status" value="1"/>
</dbReference>
<dbReference type="PANTHER" id="PTHR11847">
    <property type="entry name" value="RIBOSOMAL PROTEIN L15"/>
    <property type="match status" value="1"/>
</dbReference>
<dbReference type="Pfam" id="PF00827">
    <property type="entry name" value="Ribosomal_L15e"/>
    <property type="match status" value="1"/>
</dbReference>
<dbReference type="SMART" id="SM01384">
    <property type="entry name" value="Ribosomal_L15e"/>
    <property type="match status" value="1"/>
</dbReference>
<dbReference type="SUPFAM" id="SSF54189">
    <property type="entry name" value="Ribosomal proteins S24e, L23 and L15e"/>
    <property type="match status" value="1"/>
</dbReference>
<dbReference type="PROSITE" id="PS01194">
    <property type="entry name" value="RIBOSOMAL_L15E"/>
    <property type="match status" value="1"/>
</dbReference>
<comment type="subunit">
    <text evidence="2 3">Part of the 50S ribosomal subunit. Interacts with protein L7Ae and weakly with L44e.</text>
</comment>
<comment type="similarity">
    <text evidence="5">Belongs to the eukaryotic ribosomal protein eL15 family.</text>
</comment>
<feature type="initiator methionine" description="Removed" evidence="4">
    <location>
        <position position="1"/>
    </location>
</feature>
<feature type="chain" id="PRO_0000127570" description="Large ribosomal subunit protein eL15">
    <location>
        <begin position="2"/>
        <end position="196"/>
    </location>
</feature>
<feature type="region of interest" description="Disordered" evidence="1">
    <location>
        <begin position="72"/>
        <end position="93"/>
    </location>
</feature>
<feature type="region of interest" description="Disordered" evidence="1">
    <location>
        <begin position="163"/>
        <end position="196"/>
    </location>
</feature>
<feature type="sequence conflict" description="In Ref. 2; AA sequence." evidence="5" ref="2">
    <original>W</original>
    <variation>T</variation>
    <location>
        <position position="13"/>
    </location>
</feature>
<feature type="helix" evidence="6">
    <location>
        <begin position="6"/>
        <end position="12"/>
    </location>
</feature>
<feature type="helix" evidence="6">
    <location>
        <begin position="19"/>
        <end position="32"/>
    </location>
</feature>
<feature type="strand" evidence="7">
    <location>
        <begin position="33"/>
        <end position="35"/>
    </location>
</feature>
<feature type="strand" evidence="6">
    <location>
        <begin position="37"/>
        <end position="43"/>
    </location>
</feature>
<feature type="helix" evidence="6">
    <location>
        <begin position="47"/>
        <end position="53"/>
    </location>
</feature>
<feature type="strand" evidence="6">
    <location>
        <begin position="61"/>
        <end position="69"/>
    </location>
</feature>
<feature type="helix" evidence="6">
    <location>
        <begin position="84"/>
        <end position="86"/>
    </location>
</feature>
<feature type="strand" evidence="8">
    <location>
        <begin position="89"/>
        <end position="91"/>
    </location>
</feature>
<feature type="helix" evidence="6">
    <location>
        <begin position="98"/>
        <end position="109"/>
    </location>
</feature>
<feature type="strand" evidence="6">
    <location>
        <begin position="114"/>
        <end position="124"/>
    </location>
</feature>
<feature type="strand" evidence="6">
    <location>
        <begin position="127"/>
        <end position="135"/>
    </location>
</feature>
<feature type="helix" evidence="6">
    <location>
        <begin position="140"/>
        <end position="143"/>
    </location>
</feature>
<feature type="turn" evidence="6">
    <location>
        <begin position="146"/>
        <end position="148"/>
    </location>
</feature>
<feature type="helix" evidence="6">
    <location>
        <begin position="149"/>
        <end position="152"/>
    </location>
</feature>
<feature type="helix" evidence="6">
    <location>
        <begin position="154"/>
        <end position="156"/>
    </location>
</feature>
<feature type="helix" evidence="6">
    <location>
        <begin position="159"/>
        <end position="162"/>
    </location>
</feature>
<feature type="helix" evidence="6">
    <location>
        <begin position="166"/>
        <end position="171"/>
    </location>
</feature>
<feature type="turn" evidence="6">
    <location>
        <begin position="182"/>
        <end position="184"/>
    </location>
</feature>
<feature type="turn" evidence="6">
    <location>
        <begin position="188"/>
        <end position="192"/>
    </location>
</feature>
<reference key="1">
    <citation type="journal article" date="2004" name="Genome Res.">
        <title>Genome sequence of Haloarcula marismortui: a halophilic archaeon from the Dead Sea.</title>
        <authorList>
            <person name="Baliga N.S."/>
            <person name="Bonneau R."/>
            <person name="Facciotti M.T."/>
            <person name="Pan M."/>
            <person name="Glusman G."/>
            <person name="Deutsch E.W."/>
            <person name="Shannon P."/>
            <person name="Chiu Y."/>
            <person name="Weng R.S."/>
            <person name="Gan R.R."/>
            <person name="Hung P."/>
            <person name="Date S.V."/>
            <person name="Marcotte E."/>
            <person name="Hood L."/>
            <person name="Ng W.V."/>
        </authorList>
    </citation>
    <scope>NUCLEOTIDE SEQUENCE [LARGE SCALE GENOMIC DNA]</scope>
    <source>
        <strain>ATCC 43049 / DSM 3752 / JCM 8966 / VKM B-1809</strain>
    </source>
</reference>
<reference key="2">
    <citation type="journal article" date="1988" name="Biochemistry">
        <title>Extended N-terminal sequencing of proteins of archaebacterial ribosomes blotted from two-dimensional gels onto glass fiber and poly(vinylidene difluoride) membrane.</title>
        <authorList>
            <person name="Walsh M.J."/>
            <person name="McDougall J."/>
            <person name="Wittmann-Liebold B."/>
        </authorList>
    </citation>
    <scope>PROTEIN SEQUENCE OF 2-21</scope>
</reference>
<reference key="3">
    <citation type="journal article" date="2000" name="Science">
        <title>The complete atomic structure of the large ribosomal subunit at 2.4 A resolution.</title>
        <authorList>
            <person name="Ban N."/>
            <person name="Nissen P."/>
            <person name="Hansen J."/>
            <person name="Moore P.B."/>
            <person name="Steitz T.A."/>
        </authorList>
    </citation>
    <scope>X-RAY CRYSTALLOGRAPHY (2.4 ANGSTROMS) OF THE 50S SUBUNIT</scope>
    <source>
        <strain>ATCC 43049 / DSM 3752 / JCM 8966 / VKM B-1809</strain>
    </source>
</reference>
<reference key="4">
    <citation type="journal article" date="2000" name="Science">
        <title>The structural basis of ribosome activity in peptide bond synthesis.</title>
        <authorList>
            <person name="Nissen P."/>
            <person name="Hansen J."/>
            <person name="Ban N."/>
            <person name="Moore P.B."/>
            <person name="Steitz T.A."/>
        </authorList>
    </citation>
    <scope>X-RAY CRYSTALLOGRAPHY (3.0 ANGSTROMS) OF THE 50S SUBUNIT</scope>
    <source>
        <strain>ATCC 43049 / DSM 3752 / JCM 8966 / VKM B-1809</strain>
    </source>
</reference>
<reference key="5">
    <citation type="journal article" date="2002" name="Nat. Struct. Biol.">
        <title>A pre-translocational intermediate in protein synthesis observed in crystals of enzymatically active 50S subunits.</title>
        <authorList>
            <person name="Schmeing T.M."/>
            <person name="Seila A.C."/>
            <person name="Hansen J.L."/>
            <person name="Freeborn B."/>
            <person name="Soukup J.K."/>
            <person name="Scaringe S.A."/>
            <person name="Strobel S.A."/>
            <person name="Moore P.B."/>
            <person name="Steitz T.A."/>
        </authorList>
    </citation>
    <scope>X-RAY CRYSTALLOGRAPHY (3.1 ANGSTROMS) OF THE 50S SUBUNIT</scope>
    <source>
        <strain>ATCC 43049 / DSM 3752 / JCM 8966 / VKM B-1809</strain>
    </source>
</reference>
<reference key="6">
    <citation type="journal article" date="2001" name="EMBO J.">
        <title>The kink-turn: a new RNA secondary structure motif.</title>
        <authorList>
            <person name="Klein D.J."/>
            <person name="Schmeing T.M."/>
            <person name="Moore P.B."/>
            <person name="Steitz T.A."/>
        </authorList>
    </citation>
    <scope>X-RAY CRYSTALLOGRAPHY (2.4 ANGSTROMS) OF THE 50S SUBUNIT</scope>
    <source>
        <strain>ATCC 43049 / DSM 3752 / JCM 8966 / VKM B-1809</strain>
    </source>
</reference>
<reference key="7">
    <citation type="journal article" date="2002" name="Mol. Cell">
        <title>The structures of four macrolide antibiotics bound to the large ribosomal subunit.</title>
        <authorList>
            <person name="Hansen J.L."/>
            <person name="Ippolito J.A."/>
            <person name="Ban N."/>
            <person name="Nissen P."/>
            <person name="Moore P.B."/>
            <person name="Steitz T.A."/>
        </authorList>
    </citation>
    <scope>X-RAY CRYSTALLOGRAPHY (3.0 ANGSTROMS) OF THE 50S SUBUNIT IN COMPLEX WITH FOUR MACROLIDE ANTIBIOTICS</scope>
    <source>
        <strain>ATCC 43049 / DSM 3752 / JCM 8966 / VKM B-1809</strain>
    </source>
</reference>
<reference key="8">
    <citation type="journal article" date="2002" name="Proc. Natl. Acad. Sci. U.S.A.">
        <title>Structural insights into peptide bond formation.</title>
        <authorList>
            <person name="Hansen J.L."/>
            <person name="Schmeing T.M."/>
            <person name="Moore P.B."/>
            <person name="Steitz T.A."/>
        </authorList>
    </citation>
    <scope>X-RAY CRYSTALLOGRAPHY (2.8 ANGSTROMS) OF THE 50S SUBUNIT</scope>
    <source>
        <strain>ATCC 43049 / DSM 3752 / JCM 8966 / VKM B-1809</strain>
    </source>
</reference>
<reference key="9">
    <citation type="journal article" date="2003" name="J. Mol. Biol.">
        <title>Structures of five antibiotics bound at the peptidyl transferase center of the large ribosomal subunit.</title>
        <authorList>
            <person name="Hansen J.L."/>
            <person name="Moore P.B."/>
            <person name="Steitz T.A."/>
        </authorList>
    </citation>
    <scope>X-RAY CRYSTALLOGRAPHY (3.0 ANGSTROMS) OF THE 50S SUBUNIT IN COMPLEX WITH FIVE ANTIBIOTICS AT THE PEPTIDYL TRANSFERASE CENTER</scope>
    <source>
        <strain>ATCC 43049 / DSM 3752 / JCM 8966 / VKM B-1809</strain>
    </source>
</reference>
<reference key="10">
    <citation type="journal article" date="2003" name="RNA">
        <title>Structures of deacylated tRNA mimics bound to the E site of the large ribosomal subunit.</title>
        <authorList>
            <person name="Schmeing T.M."/>
            <person name="Moore P.B."/>
            <person name="Steitz T.A."/>
        </authorList>
    </citation>
    <scope>X-RAY CRYSTALLOGRAPHY (2.9 ANGSTROMS) OF THE 50S SUBUNIT WITH TWO DIFFERENT E SITE SUBSTRATES</scope>
</reference>
<reference key="11">
    <citation type="journal article" date="2013" name="Acta Crystallogr. D">
        <title>Revisiting the Haloarcula marismortui 50S ribosomal subunit model.</title>
        <authorList>
            <person name="Gabdulkhakov A."/>
            <person name="Nikonov S."/>
            <person name="Garber M."/>
        </authorList>
    </citation>
    <scope>X-RAY CRYSTALLOGRAPHY (2.4 ANGSTROMS) OF THE 50S SUBUNIT</scope>
</reference>
<keyword id="KW-0002">3D-structure</keyword>
<keyword id="KW-0903">Direct protein sequencing</keyword>
<keyword id="KW-1185">Reference proteome</keyword>
<keyword id="KW-0687">Ribonucleoprotein</keyword>
<keyword id="KW-0689">Ribosomal protein</keyword>
<keyword id="KW-0694">RNA-binding</keyword>
<keyword id="KW-0699">rRNA-binding</keyword>
<protein>
    <recommendedName>
        <fullName evidence="5">Large ribosomal subunit protein eL15</fullName>
    </recommendedName>
    <alternativeName>
        <fullName>50S ribosomal protein L15e</fullName>
    </alternativeName>
    <alternativeName>
        <fullName>50S ribosomal protein LC12</fullName>
    </alternativeName>
</protein>
<evidence type="ECO:0000256" key="1">
    <source>
        <dbReference type="SAM" id="MobiDB-lite"/>
    </source>
</evidence>
<evidence type="ECO:0000269" key="2">
    <source>
    </source>
</evidence>
<evidence type="ECO:0000269" key="3">
    <source>
    </source>
</evidence>
<evidence type="ECO:0000269" key="4">
    <source>
    </source>
</evidence>
<evidence type="ECO:0000305" key="5"/>
<evidence type="ECO:0007829" key="6">
    <source>
        <dbReference type="PDB" id="1VQ8"/>
    </source>
</evidence>
<evidence type="ECO:0007829" key="7">
    <source>
        <dbReference type="PDB" id="2QA4"/>
    </source>
</evidence>
<evidence type="ECO:0007829" key="8">
    <source>
        <dbReference type="PDB" id="3CC4"/>
    </source>
</evidence>
<accession>P60618</accession>
<accession>P12740</accession>
<accession>Q5V0N3</accession>
<gene>
    <name type="primary">rpl15e</name>
    <name type="ordered locus">rrnAC2065</name>
</gene>
<name>RL15E_HALMA</name>
<proteinExistence type="evidence at protein level"/>